<reference key="1">
    <citation type="journal article" date="2001" name="Nature">
        <title>Complete genome sequence of a multiple drug resistant Salmonella enterica serovar Typhi CT18.</title>
        <authorList>
            <person name="Parkhill J."/>
            <person name="Dougan G."/>
            <person name="James K.D."/>
            <person name="Thomson N.R."/>
            <person name="Pickard D."/>
            <person name="Wain J."/>
            <person name="Churcher C.M."/>
            <person name="Mungall K.L."/>
            <person name="Bentley S.D."/>
            <person name="Holden M.T.G."/>
            <person name="Sebaihia M."/>
            <person name="Baker S."/>
            <person name="Basham D."/>
            <person name="Brooks K."/>
            <person name="Chillingworth T."/>
            <person name="Connerton P."/>
            <person name="Cronin A."/>
            <person name="Davis P."/>
            <person name="Davies R.M."/>
            <person name="Dowd L."/>
            <person name="White N."/>
            <person name="Farrar J."/>
            <person name="Feltwell T."/>
            <person name="Hamlin N."/>
            <person name="Haque A."/>
            <person name="Hien T.T."/>
            <person name="Holroyd S."/>
            <person name="Jagels K."/>
            <person name="Krogh A."/>
            <person name="Larsen T.S."/>
            <person name="Leather S."/>
            <person name="Moule S."/>
            <person name="O'Gaora P."/>
            <person name="Parry C."/>
            <person name="Quail M.A."/>
            <person name="Rutherford K.M."/>
            <person name="Simmonds M."/>
            <person name="Skelton J."/>
            <person name="Stevens K."/>
            <person name="Whitehead S."/>
            <person name="Barrell B.G."/>
        </authorList>
    </citation>
    <scope>NUCLEOTIDE SEQUENCE [LARGE SCALE GENOMIC DNA]</scope>
    <source>
        <strain>CT18</strain>
    </source>
</reference>
<reference key="2">
    <citation type="journal article" date="2003" name="J. Bacteriol.">
        <title>Comparative genomics of Salmonella enterica serovar Typhi strains Ty2 and CT18.</title>
        <authorList>
            <person name="Deng W."/>
            <person name="Liou S.-R."/>
            <person name="Plunkett G. III"/>
            <person name="Mayhew G.F."/>
            <person name="Rose D.J."/>
            <person name="Burland V."/>
            <person name="Kodoyianni V."/>
            <person name="Schwartz D.C."/>
            <person name="Blattner F.R."/>
        </authorList>
    </citation>
    <scope>NUCLEOTIDE SEQUENCE [LARGE SCALE GENOMIC DNA]</scope>
    <source>
        <strain>ATCC 700931 / Ty2</strain>
    </source>
</reference>
<organism>
    <name type="scientific">Salmonella typhi</name>
    <dbReference type="NCBI Taxonomy" id="90370"/>
    <lineage>
        <taxon>Bacteria</taxon>
        <taxon>Pseudomonadati</taxon>
        <taxon>Pseudomonadota</taxon>
        <taxon>Gammaproteobacteria</taxon>
        <taxon>Enterobacterales</taxon>
        <taxon>Enterobacteriaceae</taxon>
        <taxon>Salmonella</taxon>
    </lineage>
</organism>
<gene>
    <name evidence="1" type="primary">cmoB</name>
    <name type="ordered locus">STY2114</name>
    <name type="ordered locus">t0971</name>
</gene>
<dbReference type="EC" id="2.5.1.-" evidence="1"/>
<dbReference type="EMBL" id="AE014613">
    <property type="protein sequence ID" value="AAO68643.1"/>
    <property type="molecule type" value="Genomic_DNA"/>
</dbReference>
<dbReference type="EMBL" id="AL513382">
    <property type="protein sequence ID" value="CAD05657.1"/>
    <property type="molecule type" value="Genomic_DNA"/>
</dbReference>
<dbReference type="RefSeq" id="NP_456473.1">
    <property type="nucleotide sequence ID" value="NC_003198.1"/>
</dbReference>
<dbReference type="RefSeq" id="WP_000569029.1">
    <property type="nucleotide sequence ID" value="NZ_WSUR01000004.1"/>
</dbReference>
<dbReference type="SMR" id="Q8Z5W0"/>
<dbReference type="STRING" id="220341.gene:17586022"/>
<dbReference type="KEGG" id="stt:t0971"/>
<dbReference type="KEGG" id="sty:STY2114"/>
<dbReference type="PATRIC" id="fig|220341.7.peg.2124"/>
<dbReference type="eggNOG" id="COG0500">
    <property type="taxonomic scope" value="Bacteria"/>
</dbReference>
<dbReference type="HOGENOM" id="CLU_052665_0_0_6"/>
<dbReference type="OMA" id="CEWRSDF"/>
<dbReference type="OrthoDB" id="9773188at2"/>
<dbReference type="Proteomes" id="UP000000541">
    <property type="component" value="Chromosome"/>
</dbReference>
<dbReference type="Proteomes" id="UP000002670">
    <property type="component" value="Chromosome"/>
</dbReference>
<dbReference type="GO" id="GO:0008168">
    <property type="term" value="F:methyltransferase activity"/>
    <property type="evidence" value="ECO:0007669"/>
    <property type="project" value="TreeGrafter"/>
</dbReference>
<dbReference type="GO" id="GO:0016765">
    <property type="term" value="F:transferase activity, transferring alkyl or aryl (other than methyl) groups"/>
    <property type="evidence" value="ECO:0007669"/>
    <property type="project" value="UniProtKB-UniRule"/>
</dbReference>
<dbReference type="GO" id="GO:0002098">
    <property type="term" value="P:tRNA wobble uridine modification"/>
    <property type="evidence" value="ECO:0007669"/>
    <property type="project" value="InterPro"/>
</dbReference>
<dbReference type="CDD" id="cd02440">
    <property type="entry name" value="AdoMet_MTases"/>
    <property type="match status" value="1"/>
</dbReference>
<dbReference type="FunFam" id="3.40.50.150:FF:000080">
    <property type="entry name" value="tRNA U34 carboxymethyltransferase"/>
    <property type="match status" value="1"/>
</dbReference>
<dbReference type="Gene3D" id="3.40.50.150">
    <property type="entry name" value="Vaccinia Virus protein VP39"/>
    <property type="match status" value="1"/>
</dbReference>
<dbReference type="HAMAP" id="MF_01590">
    <property type="entry name" value="tRNA_carboxymethyltr_CmoB"/>
    <property type="match status" value="1"/>
</dbReference>
<dbReference type="InterPro" id="IPR010017">
    <property type="entry name" value="CmoB"/>
</dbReference>
<dbReference type="InterPro" id="IPR027555">
    <property type="entry name" value="Mo5U34_MeTrfas-like"/>
</dbReference>
<dbReference type="InterPro" id="IPR029063">
    <property type="entry name" value="SAM-dependent_MTases_sf"/>
</dbReference>
<dbReference type="NCBIfam" id="NF011650">
    <property type="entry name" value="PRK15068.1"/>
    <property type="match status" value="1"/>
</dbReference>
<dbReference type="NCBIfam" id="TIGR00452">
    <property type="entry name" value="tRNA 5-methoxyuridine(34)/uridine 5-oxyacetic acid(34) synthase CmoB"/>
    <property type="match status" value="1"/>
</dbReference>
<dbReference type="PANTHER" id="PTHR43464">
    <property type="entry name" value="METHYLTRANSFERASE"/>
    <property type="match status" value="1"/>
</dbReference>
<dbReference type="PANTHER" id="PTHR43464:SF95">
    <property type="entry name" value="TRNA U34 CARBOXYMETHYLTRANSFERASE"/>
    <property type="match status" value="1"/>
</dbReference>
<dbReference type="Pfam" id="PF08003">
    <property type="entry name" value="Methyltransf_9"/>
    <property type="match status" value="1"/>
</dbReference>
<dbReference type="SUPFAM" id="SSF53335">
    <property type="entry name" value="S-adenosyl-L-methionine-dependent methyltransferases"/>
    <property type="match status" value="1"/>
</dbReference>
<accession>Q8Z5W0</accession>
<accession>Q7CAL3</accession>
<comment type="function">
    <text evidence="1">Catalyzes carboxymethyl transfer from carboxy-S-adenosyl-L-methionine (Cx-SAM) to 5-hydroxyuridine (ho5U) to form 5-carboxymethoxyuridine (cmo5U) at position 34 in tRNAs.</text>
</comment>
<comment type="catalytic activity">
    <reaction evidence="1">
        <text>carboxy-S-adenosyl-L-methionine + 5-hydroxyuridine(34) in tRNA = 5-carboxymethoxyuridine(34) in tRNA + S-adenosyl-L-homocysteine + H(+)</text>
        <dbReference type="Rhea" id="RHEA:52848"/>
        <dbReference type="Rhea" id="RHEA-COMP:13381"/>
        <dbReference type="Rhea" id="RHEA-COMP:13383"/>
        <dbReference type="ChEBI" id="CHEBI:15378"/>
        <dbReference type="ChEBI" id="CHEBI:57856"/>
        <dbReference type="ChEBI" id="CHEBI:134278"/>
        <dbReference type="ChEBI" id="CHEBI:136877"/>
        <dbReference type="ChEBI" id="CHEBI:136879"/>
    </reaction>
</comment>
<comment type="subunit">
    <text evidence="1">Homotetramer.</text>
</comment>
<comment type="similarity">
    <text evidence="1">Belongs to the class I-like SAM-binding methyltransferase superfamily. CmoB family.</text>
</comment>
<sequence length="323" mass="37049">MIEFGNFYQLIAKNHLSHWLETLPAQIAAWQREQQHGLFKQWSNAVEFLPEITPWRLDLLHSVTAESETPLSEGQLKRIDTLLRNLMPWRKGPFSLYGVDIDTEWRSDWKWDRVLPHLSDLTGRTILDVGCGSGYHLWRMIGAGAHLAVGIDPTQLFLCQFEAVRKLLGNDQRAHLLPLGIEQLPALKAFDTVFSMGVLYHRRSPLEHLWQLKDQLVNEGELVLETLVVDGDENTVLVPGDRYAQMRNVYFIPSAPALKKWLEKCGFVDVRIADVCVTTTEEQRRTEWMVTESLADFLDPNDRSKTVEGYPAPQRAVLIARKP</sequence>
<name>CMOB_SALTI</name>
<protein>
    <recommendedName>
        <fullName evidence="1">tRNA U34 carboxymethyltransferase</fullName>
        <ecNumber evidence="1">2.5.1.-</ecNumber>
    </recommendedName>
</protein>
<feature type="chain" id="PRO_0000313961" description="tRNA U34 carboxymethyltransferase">
    <location>
        <begin position="1"/>
        <end position="323"/>
    </location>
</feature>
<feature type="binding site" evidence="1">
    <location>
        <position position="91"/>
    </location>
    <ligand>
        <name>carboxy-S-adenosyl-L-methionine</name>
        <dbReference type="ChEBI" id="CHEBI:134278"/>
    </ligand>
</feature>
<feature type="binding site" evidence="1">
    <location>
        <position position="105"/>
    </location>
    <ligand>
        <name>carboxy-S-adenosyl-L-methionine</name>
        <dbReference type="ChEBI" id="CHEBI:134278"/>
    </ligand>
</feature>
<feature type="binding site" evidence="1">
    <location>
        <position position="110"/>
    </location>
    <ligand>
        <name>carboxy-S-adenosyl-L-methionine</name>
        <dbReference type="ChEBI" id="CHEBI:134278"/>
    </ligand>
</feature>
<feature type="binding site" evidence="1">
    <location>
        <position position="130"/>
    </location>
    <ligand>
        <name>carboxy-S-adenosyl-L-methionine</name>
        <dbReference type="ChEBI" id="CHEBI:134278"/>
    </ligand>
</feature>
<feature type="binding site" evidence="1">
    <location>
        <begin position="152"/>
        <end position="154"/>
    </location>
    <ligand>
        <name>carboxy-S-adenosyl-L-methionine</name>
        <dbReference type="ChEBI" id="CHEBI:134278"/>
    </ligand>
</feature>
<feature type="binding site" evidence="1">
    <location>
        <begin position="181"/>
        <end position="182"/>
    </location>
    <ligand>
        <name>carboxy-S-adenosyl-L-methionine</name>
        <dbReference type="ChEBI" id="CHEBI:134278"/>
    </ligand>
</feature>
<feature type="binding site" evidence="1">
    <location>
        <position position="196"/>
    </location>
    <ligand>
        <name>carboxy-S-adenosyl-L-methionine</name>
        <dbReference type="ChEBI" id="CHEBI:134278"/>
    </ligand>
</feature>
<feature type="binding site" evidence="1">
    <location>
        <position position="200"/>
    </location>
    <ligand>
        <name>carboxy-S-adenosyl-L-methionine</name>
        <dbReference type="ChEBI" id="CHEBI:134278"/>
    </ligand>
</feature>
<feature type="binding site" evidence="1">
    <location>
        <position position="315"/>
    </location>
    <ligand>
        <name>carboxy-S-adenosyl-L-methionine</name>
        <dbReference type="ChEBI" id="CHEBI:134278"/>
    </ligand>
</feature>
<evidence type="ECO:0000255" key="1">
    <source>
        <dbReference type="HAMAP-Rule" id="MF_01590"/>
    </source>
</evidence>
<proteinExistence type="inferred from homology"/>
<keyword id="KW-0808">Transferase</keyword>
<keyword id="KW-0819">tRNA processing</keyword>